<accession>Q53NF0</accession>
<accession>Q0IU56</accession>
<reference key="1">
    <citation type="journal article" date="2005" name="BMC Biol.">
        <title>The sequence of rice chromosomes 11 and 12, rich in disease resistance genes and recent gene duplications.</title>
        <authorList>
            <consortium name="The rice chromosomes 11 and 12 sequencing consortia"/>
        </authorList>
    </citation>
    <scope>NUCLEOTIDE SEQUENCE [LARGE SCALE GENOMIC DNA]</scope>
    <source>
        <strain>cv. Nipponbare</strain>
    </source>
</reference>
<reference key="2">
    <citation type="journal article" date="2005" name="Nature">
        <title>The map-based sequence of the rice genome.</title>
        <authorList>
            <consortium name="International rice genome sequencing project (IRGSP)"/>
        </authorList>
    </citation>
    <scope>NUCLEOTIDE SEQUENCE [LARGE SCALE GENOMIC DNA]</scope>
    <source>
        <strain>cv. Nipponbare</strain>
    </source>
</reference>
<reference key="3">
    <citation type="journal article" date="2008" name="Nucleic Acids Res.">
        <title>The rice annotation project database (RAP-DB): 2008 update.</title>
        <authorList>
            <consortium name="The rice annotation project (RAP)"/>
        </authorList>
    </citation>
    <scope>GENOME REANNOTATION</scope>
    <source>
        <strain>cv. Nipponbare</strain>
    </source>
</reference>
<reference key="4">
    <citation type="journal article" date="2013" name="Rice">
        <title>Improvement of the Oryza sativa Nipponbare reference genome using next generation sequence and optical map data.</title>
        <authorList>
            <person name="Kawahara Y."/>
            <person name="de la Bastide M."/>
            <person name="Hamilton J.P."/>
            <person name="Kanamori H."/>
            <person name="McCombie W.R."/>
            <person name="Ouyang S."/>
            <person name="Schwartz D.C."/>
            <person name="Tanaka T."/>
            <person name="Wu J."/>
            <person name="Zhou S."/>
            <person name="Childs K.L."/>
            <person name="Davidson R.M."/>
            <person name="Lin H."/>
            <person name="Quesada-Ocampo L."/>
            <person name="Vaillancourt B."/>
            <person name="Sakai H."/>
            <person name="Lee S.S."/>
            <person name="Kim J."/>
            <person name="Numa H."/>
            <person name="Itoh T."/>
            <person name="Buell C.R."/>
            <person name="Matsumoto T."/>
        </authorList>
    </citation>
    <scope>GENOME REANNOTATION</scope>
    <source>
        <strain>cv. Nipponbare</strain>
    </source>
</reference>
<reference key="5">
    <citation type="journal article" date="2006" name="BMC Plant Biol.">
        <title>Analysis of rice glycosyl hydrolase family 1 and expression of Os4bglu12 beta-glucosidase.</title>
        <authorList>
            <person name="Opassiri R."/>
            <person name="Pomthong B."/>
            <person name="Onkoksoong T."/>
            <person name="Akiyama T."/>
            <person name="Esen A."/>
            <person name="Ketudat Cairns J.R."/>
        </authorList>
    </citation>
    <scope>GENE FAMILY</scope>
    <scope>NOMENCLATURE</scope>
</reference>
<gene>
    <name type="primary">BGLU35</name>
    <name type="ordered locus">Os11g0184300</name>
    <name type="ordered locus">Os11g0184200</name>
    <name type="ordered locus">LOC_Os11g08120</name>
</gene>
<organism>
    <name type="scientific">Oryza sativa subsp. japonica</name>
    <name type="common">Rice</name>
    <dbReference type="NCBI Taxonomy" id="39947"/>
    <lineage>
        <taxon>Eukaryota</taxon>
        <taxon>Viridiplantae</taxon>
        <taxon>Streptophyta</taxon>
        <taxon>Embryophyta</taxon>
        <taxon>Tracheophyta</taxon>
        <taxon>Spermatophyta</taxon>
        <taxon>Magnoliopsida</taxon>
        <taxon>Liliopsida</taxon>
        <taxon>Poales</taxon>
        <taxon>Poaceae</taxon>
        <taxon>BOP clade</taxon>
        <taxon>Oryzoideae</taxon>
        <taxon>Oryzeae</taxon>
        <taxon>Oryzinae</taxon>
        <taxon>Oryza</taxon>
        <taxon>Oryza sativa</taxon>
    </lineage>
</organism>
<evidence type="ECO:0000250" key="1">
    <source>
        <dbReference type="UniProtKB" id="Q1XH05"/>
    </source>
</evidence>
<evidence type="ECO:0000250" key="2">
    <source>
        <dbReference type="UniProtKB" id="Q75I94"/>
    </source>
</evidence>
<evidence type="ECO:0000250" key="3">
    <source>
        <dbReference type="UniProtKB" id="Q7XSK0"/>
    </source>
</evidence>
<evidence type="ECO:0000250" key="4">
    <source>
        <dbReference type="UniProtKB" id="Q9SPP9"/>
    </source>
</evidence>
<evidence type="ECO:0000255" key="5"/>
<evidence type="ECO:0000255" key="6">
    <source>
        <dbReference type="PROSITE-ProRule" id="PRU00498"/>
    </source>
</evidence>
<evidence type="ECO:0000305" key="7"/>
<protein>
    <recommendedName>
        <fullName>Putative beta-glucosidase 35</fullName>
        <shortName>Os11bglu35</shortName>
        <ecNumber evidence="2">3.2.1.21</ecNumber>
    </recommendedName>
</protein>
<name>BGL35_ORYSJ</name>
<sequence length="487" mass="55607">MGIRMGRRLLLITLLLGALLCNNVAYAKFSRYSFPKDFIFGTGSAAYQYEGAYKEGGKGPSIWDTFTHIPGKILNNDTGDVANDFYHRYKEDVNLLKDMNMDAFRFSIAWTRILPNGSLSGGINREGVAFYNSLINDVIAKGMIPFVTIFHWDTPPGSGKQIRRLPERKHSNMHEKDYADFAEVCFHEFGDRVKYWTTFNEPFTYSAYGYGGGVFASGRCAPYVSKSCGAGDSSREPYLVTHHIHLSHAAVVHLYRTRYQPTQKGQIGMVVVTHWFVPYDDTAADRGAVQRSLDFMFGWFMDPLVHGDYPGTMRGWLGDRLPKFTPAQSAMVKGSYDFIGINYYTTYYAKSVPPPNSNELSYDVDSRANTTGFRNGKPIGPQFTPIFFNYPPGIREVLLYTKRRYNNPAIYITENGGNNSTVPEALRDGHRIEFHSKHLQFVNHAIRNGWGDGYLDRFGLIYVDRKTLTRYRKDSSYWIEDFLKKQY</sequence>
<keyword id="KW-1015">Disulfide bond</keyword>
<keyword id="KW-0325">Glycoprotein</keyword>
<keyword id="KW-0326">Glycosidase</keyword>
<keyword id="KW-0378">Hydrolase</keyword>
<keyword id="KW-1185">Reference proteome</keyword>
<keyword id="KW-0732">Signal</keyword>
<comment type="catalytic activity">
    <reaction evidence="2">
        <text>Hydrolysis of terminal, non-reducing beta-D-glucosyl residues with release of beta-D-glucose.</text>
        <dbReference type="EC" id="3.2.1.21"/>
    </reaction>
</comment>
<comment type="similarity">
    <text evidence="7">Belongs to the glycosyl hydrolase 1 family.</text>
</comment>
<comment type="sequence caution" evidence="7">
    <conflict type="erroneous gene model prediction">
        <sequence resource="EMBL-CDS" id="AAY23259"/>
    </conflict>
</comment>
<comment type="sequence caution" evidence="7">
    <conflict type="erroneous gene model prediction">
        <sequence resource="EMBL-CDS" id="ABA91756"/>
    </conflict>
</comment>
<comment type="sequence caution" evidence="7">
    <conflict type="erroneous gene model prediction">
        <sequence resource="EMBL-CDS" id="BAF27759"/>
    </conflict>
</comment>
<feature type="signal peptide" evidence="5">
    <location>
        <begin position="1"/>
        <end position="27"/>
    </location>
</feature>
<feature type="chain" id="PRO_0000390352" description="Putative beta-glucosidase 35">
    <location>
        <begin position="28"/>
        <end position="487"/>
    </location>
</feature>
<feature type="active site" description="Proton donor" evidence="3">
    <location>
        <position position="201"/>
    </location>
</feature>
<feature type="active site" description="Nucleophile" evidence="3">
    <location>
        <position position="414"/>
    </location>
</feature>
<feature type="binding site" evidence="3">
    <location>
        <position position="48"/>
    </location>
    <ligand>
        <name>a beta-D-glucoside</name>
        <dbReference type="ChEBI" id="CHEBI:22798"/>
    </ligand>
</feature>
<feature type="binding site" evidence="3">
    <location>
        <position position="151"/>
    </location>
    <ligand>
        <name>a beta-D-glucoside</name>
        <dbReference type="ChEBI" id="CHEBI:22798"/>
    </ligand>
</feature>
<feature type="binding site" evidence="3">
    <location>
        <begin position="200"/>
        <end position="201"/>
    </location>
    <ligand>
        <name>a beta-D-glucoside</name>
        <dbReference type="ChEBI" id="CHEBI:22798"/>
    </ligand>
</feature>
<feature type="binding site" evidence="3">
    <location>
        <position position="344"/>
    </location>
    <ligand>
        <name>a beta-D-glucoside</name>
        <dbReference type="ChEBI" id="CHEBI:22798"/>
    </ligand>
</feature>
<feature type="binding site" evidence="4">
    <location>
        <position position="414"/>
    </location>
    <ligand>
        <name>a beta-D-glucoside</name>
        <dbReference type="ChEBI" id="CHEBI:22798"/>
    </ligand>
</feature>
<feature type="binding site" evidence="1">
    <location>
        <position position="458"/>
    </location>
    <ligand>
        <name>a beta-D-glucoside</name>
        <dbReference type="ChEBI" id="CHEBI:22798"/>
    </ligand>
</feature>
<feature type="glycosylation site" description="N-linked (GlcNAc...) asparagine" evidence="6">
    <location>
        <position position="76"/>
    </location>
</feature>
<feature type="glycosylation site" description="N-linked (GlcNAc...) asparagine" evidence="6">
    <location>
        <position position="116"/>
    </location>
</feature>
<feature type="glycosylation site" description="N-linked (GlcNAc...) asparagine" evidence="6">
    <location>
        <position position="369"/>
    </location>
</feature>
<feature type="glycosylation site" description="N-linked (GlcNAc...) asparagine" evidence="6">
    <location>
        <position position="418"/>
    </location>
</feature>
<feature type="glycosylation site" description="N-linked (GlcNAc...) asparagine" evidence="6">
    <location>
        <position position="419"/>
    </location>
</feature>
<feature type="disulfide bond" evidence="3">
    <location>
        <begin position="220"/>
        <end position="228"/>
    </location>
</feature>
<proteinExistence type="inferred from homology"/>
<dbReference type="EC" id="3.2.1.21" evidence="2"/>
<dbReference type="EMBL" id="AC134047">
    <property type="protein sequence ID" value="AAY23259.1"/>
    <property type="status" value="ALT_SEQ"/>
    <property type="molecule type" value="Genomic_DNA"/>
</dbReference>
<dbReference type="EMBL" id="DP000010">
    <property type="protein sequence ID" value="ABA91756.1"/>
    <property type="status" value="ALT_SEQ"/>
    <property type="molecule type" value="Genomic_DNA"/>
</dbReference>
<dbReference type="EMBL" id="AP008217">
    <property type="protein sequence ID" value="BAF27759.2"/>
    <property type="status" value="ALT_SEQ"/>
    <property type="molecule type" value="Genomic_DNA"/>
</dbReference>
<dbReference type="EMBL" id="AP014967">
    <property type="status" value="NOT_ANNOTATED_CDS"/>
    <property type="molecule type" value="Genomic_DNA"/>
</dbReference>
<dbReference type="SMR" id="Q53NF0"/>
<dbReference type="FunCoup" id="Q53NF0">
    <property type="interactions" value="69"/>
</dbReference>
<dbReference type="STRING" id="39947.Q53NF0"/>
<dbReference type="GlyCosmos" id="Q53NF0">
    <property type="glycosylation" value="5 sites, No reported glycans"/>
</dbReference>
<dbReference type="PaxDb" id="39947-Q53NF0"/>
<dbReference type="KEGG" id="dosa:Os11g0184200"/>
<dbReference type="eggNOG" id="KOG0626">
    <property type="taxonomic scope" value="Eukaryota"/>
</dbReference>
<dbReference type="HOGENOM" id="CLU_001859_1_0_1"/>
<dbReference type="InParanoid" id="Q53NF0"/>
<dbReference type="Proteomes" id="UP000000763">
    <property type="component" value="Chromosome 11"/>
</dbReference>
<dbReference type="Proteomes" id="UP000059680">
    <property type="component" value="Chromosome 11"/>
</dbReference>
<dbReference type="GO" id="GO:0033907">
    <property type="term" value="F:beta-D-fucosidase activity"/>
    <property type="evidence" value="ECO:0007669"/>
    <property type="project" value="UniProtKB-ARBA"/>
</dbReference>
<dbReference type="GO" id="GO:0004565">
    <property type="term" value="F:beta-galactosidase activity"/>
    <property type="evidence" value="ECO:0007669"/>
    <property type="project" value="UniProtKB-ARBA"/>
</dbReference>
<dbReference type="GO" id="GO:0008422">
    <property type="term" value="F:beta-glucosidase activity"/>
    <property type="evidence" value="ECO:0000318"/>
    <property type="project" value="GO_Central"/>
</dbReference>
<dbReference type="GO" id="GO:0005975">
    <property type="term" value="P:carbohydrate metabolic process"/>
    <property type="evidence" value="ECO:0007669"/>
    <property type="project" value="InterPro"/>
</dbReference>
<dbReference type="FunFam" id="3.20.20.80:FF:000020">
    <property type="entry name" value="Beta-glucosidase 12"/>
    <property type="match status" value="1"/>
</dbReference>
<dbReference type="Gene3D" id="3.20.20.80">
    <property type="entry name" value="Glycosidases"/>
    <property type="match status" value="1"/>
</dbReference>
<dbReference type="InterPro" id="IPR001360">
    <property type="entry name" value="Glyco_hydro_1"/>
</dbReference>
<dbReference type="InterPro" id="IPR033132">
    <property type="entry name" value="Glyco_hydro_1_N_CS"/>
</dbReference>
<dbReference type="InterPro" id="IPR017853">
    <property type="entry name" value="Glycoside_hydrolase_SF"/>
</dbReference>
<dbReference type="PANTHER" id="PTHR10353:SF334">
    <property type="entry name" value="BETA-GLUCOSIDASE 29"/>
    <property type="match status" value="1"/>
</dbReference>
<dbReference type="PANTHER" id="PTHR10353">
    <property type="entry name" value="GLYCOSYL HYDROLASE"/>
    <property type="match status" value="1"/>
</dbReference>
<dbReference type="Pfam" id="PF00232">
    <property type="entry name" value="Glyco_hydro_1"/>
    <property type="match status" value="1"/>
</dbReference>
<dbReference type="PRINTS" id="PR00131">
    <property type="entry name" value="GLHYDRLASE1"/>
</dbReference>
<dbReference type="SUPFAM" id="SSF51445">
    <property type="entry name" value="(Trans)glycosidases"/>
    <property type="match status" value="1"/>
</dbReference>
<dbReference type="PROSITE" id="PS00653">
    <property type="entry name" value="GLYCOSYL_HYDROL_F1_2"/>
    <property type="match status" value="1"/>
</dbReference>